<sequence>MPAKESPFRVNLKILPSAQRNELTGYENGLLKIKIAAQPEKGKANKALVDYLSELLDTPKSEIEICRGLSGRNKVVAFYSLSQADFEAKISAILRGS</sequence>
<evidence type="ECO:0000255" key="1">
    <source>
        <dbReference type="HAMAP-Rule" id="MF_00634"/>
    </source>
</evidence>
<organism>
    <name type="scientific">Dehalococcoides mccartyi (strain ATCC BAA-2266 / KCTC 15142 / 195)</name>
    <name type="common">Dehalococcoides ethenogenes (strain 195)</name>
    <dbReference type="NCBI Taxonomy" id="243164"/>
    <lineage>
        <taxon>Bacteria</taxon>
        <taxon>Bacillati</taxon>
        <taxon>Chloroflexota</taxon>
        <taxon>Dehalococcoidia</taxon>
        <taxon>Dehalococcoidales</taxon>
        <taxon>Dehalococcoidaceae</taxon>
        <taxon>Dehalococcoides</taxon>
    </lineage>
</organism>
<comment type="similarity">
    <text evidence="1">Belongs to the UPF0235 family.</text>
</comment>
<name>Y1292_DEHM1</name>
<proteinExistence type="inferred from homology"/>
<dbReference type="EMBL" id="CP000027">
    <property type="protein sequence ID" value="AAW40607.1"/>
    <property type="molecule type" value="Genomic_DNA"/>
</dbReference>
<dbReference type="RefSeq" id="WP_010936981.1">
    <property type="nucleotide sequence ID" value="NC_002936.3"/>
</dbReference>
<dbReference type="SMR" id="Q3Z6Z5"/>
<dbReference type="STRING" id="243164.DET1292"/>
<dbReference type="GeneID" id="3230574"/>
<dbReference type="KEGG" id="det:DET1292"/>
<dbReference type="PATRIC" id="fig|243164.10.peg.1223"/>
<dbReference type="eggNOG" id="COG1872">
    <property type="taxonomic scope" value="Bacteria"/>
</dbReference>
<dbReference type="HOGENOM" id="CLU_130694_6_2_0"/>
<dbReference type="InParanoid" id="Q3Z6Z5"/>
<dbReference type="Proteomes" id="UP000008289">
    <property type="component" value="Chromosome"/>
</dbReference>
<dbReference type="GO" id="GO:0005737">
    <property type="term" value="C:cytoplasm"/>
    <property type="evidence" value="ECO:0007669"/>
    <property type="project" value="TreeGrafter"/>
</dbReference>
<dbReference type="Gene3D" id="3.30.1200.10">
    <property type="entry name" value="YggU-like"/>
    <property type="match status" value="1"/>
</dbReference>
<dbReference type="HAMAP" id="MF_00634">
    <property type="entry name" value="UPF0235"/>
    <property type="match status" value="1"/>
</dbReference>
<dbReference type="InterPro" id="IPR003746">
    <property type="entry name" value="DUF167"/>
</dbReference>
<dbReference type="InterPro" id="IPR036591">
    <property type="entry name" value="YggU-like_sf"/>
</dbReference>
<dbReference type="NCBIfam" id="TIGR00251">
    <property type="entry name" value="DUF167 family protein"/>
    <property type="match status" value="1"/>
</dbReference>
<dbReference type="PANTHER" id="PTHR13420">
    <property type="entry name" value="UPF0235 PROTEIN C15ORF40"/>
    <property type="match status" value="1"/>
</dbReference>
<dbReference type="PANTHER" id="PTHR13420:SF7">
    <property type="entry name" value="UPF0235 PROTEIN C15ORF40"/>
    <property type="match status" value="1"/>
</dbReference>
<dbReference type="Pfam" id="PF02594">
    <property type="entry name" value="DUF167"/>
    <property type="match status" value="1"/>
</dbReference>
<dbReference type="SMART" id="SM01152">
    <property type="entry name" value="DUF167"/>
    <property type="match status" value="1"/>
</dbReference>
<dbReference type="SUPFAM" id="SSF69786">
    <property type="entry name" value="YggU-like"/>
    <property type="match status" value="1"/>
</dbReference>
<gene>
    <name type="ordered locus">DET1292</name>
</gene>
<protein>
    <recommendedName>
        <fullName evidence="1">UPF0235 protein DET1292</fullName>
    </recommendedName>
</protein>
<feature type="chain" id="PRO_1000072667" description="UPF0235 protein DET1292">
    <location>
        <begin position="1"/>
        <end position="97"/>
    </location>
</feature>
<accession>Q3Z6Z5</accession>
<reference key="1">
    <citation type="journal article" date="2005" name="Science">
        <title>Genome sequence of the PCE-dechlorinating bacterium Dehalococcoides ethenogenes.</title>
        <authorList>
            <person name="Seshadri R."/>
            <person name="Adrian L."/>
            <person name="Fouts D.E."/>
            <person name="Eisen J.A."/>
            <person name="Phillippy A.M."/>
            <person name="Methe B.A."/>
            <person name="Ward N.L."/>
            <person name="Nelson W.C."/>
            <person name="DeBoy R.T."/>
            <person name="Khouri H.M."/>
            <person name="Kolonay J.F."/>
            <person name="Dodson R.J."/>
            <person name="Daugherty S.C."/>
            <person name="Brinkac L.M."/>
            <person name="Sullivan S.A."/>
            <person name="Madupu R."/>
            <person name="Nelson K.E."/>
            <person name="Kang K.H."/>
            <person name="Impraim M."/>
            <person name="Tran K."/>
            <person name="Robinson J.M."/>
            <person name="Forberger H.A."/>
            <person name="Fraser C.M."/>
            <person name="Zinder S.H."/>
            <person name="Heidelberg J.F."/>
        </authorList>
    </citation>
    <scope>NUCLEOTIDE SEQUENCE [LARGE SCALE GENOMIC DNA]</scope>
    <source>
        <strain>ATCC BAA-2266 / KCTC 15142 / 195</strain>
    </source>
</reference>